<reference key="1">
    <citation type="journal article" date="2002" name="Environ. Microbiol.">
        <title>Complete genome sequence and comparative analysis of the metabolically versatile Pseudomonas putida KT2440.</title>
        <authorList>
            <person name="Nelson K.E."/>
            <person name="Weinel C."/>
            <person name="Paulsen I.T."/>
            <person name="Dodson R.J."/>
            <person name="Hilbert H."/>
            <person name="Martins dos Santos V.A.P."/>
            <person name="Fouts D.E."/>
            <person name="Gill S.R."/>
            <person name="Pop M."/>
            <person name="Holmes M."/>
            <person name="Brinkac L.M."/>
            <person name="Beanan M.J."/>
            <person name="DeBoy R.T."/>
            <person name="Daugherty S.C."/>
            <person name="Kolonay J.F."/>
            <person name="Madupu R."/>
            <person name="Nelson W.C."/>
            <person name="White O."/>
            <person name="Peterson J.D."/>
            <person name="Khouri H.M."/>
            <person name="Hance I."/>
            <person name="Chris Lee P."/>
            <person name="Holtzapple E.K."/>
            <person name="Scanlan D."/>
            <person name="Tran K."/>
            <person name="Moazzez A."/>
            <person name="Utterback T.R."/>
            <person name="Rizzo M."/>
            <person name="Lee K."/>
            <person name="Kosack D."/>
            <person name="Moestl D."/>
            <person name="Wedler H."/>
            <person name="Lauber J."/>
            <person name="Stjepandic D."/>
            <person name="Hoheisel J."/>
            <person name="Straetz M."/>
            <person name="Heim S."/>
            <person name="Kiewitz C."/>
            <person name="Eisen J.A."/>
            <person name="Timmis K.N."/>
            <person name="Duesterhoeft A."/>
            <person name="Tuemmler B."/>
            <person name="Fraser C.M."/>
        </authorList>
    </citation>
    <scope>NUCLEOTIDE SEQUENCE [LARGE SCALE GENOMIC DNA]</scope>
    <source>
        <strain>ATCC 47054 / DSM 6125 / CFBP 8728 / NCIMB 11950 / KT2440</strain>
    </source>
</reference>
<evidence type="ECO:0000255" key="1">
    <source>
        <dbReference type="HAMAP-Rule" id="MF_01020"/>
    </source>
</evidence>
<accession>Q88D14</accession>
<name>HIS2_PSEPK</name>
<organism>
    <name type="scientific">Pseudomonas putida (strain ATCC 47054 / DSM 6125 / CFBP 8728 / NCIMB 11950 / KT2440)</name>
    <dbReference type="NCBI Taxonomy" id="160488"/>
    <lineage>
        <taxon>Bacteria</taxon>
        <taxon>Pseudomonadati</taxon>
        <taxon>Pseudomonadota</taxon>
        <taxon>Gammaproteobacteria</taxon>
        <taxon>Pseudomonadales</taxon>
        <taxon>Pseudomonadaceae</taxon>
        <taxon>Pseudomonas</taxon>
    </lineage>
</organism>
<sequence length="111" mass="12357">MSDTLNRLAEVLEERKQAAPDSSYVASLYHKGLNKILEKLGEESVETIIAAKDAQISKDYSDVIYETADLWFHSLVMLSALGQHPQAVLDELERRFGLSGHDEKAARQPSA</sequence>
<keyword id="KW-0028">Amino-acid biosynthesis</keyword>
<keyword id="KW-0067">ATP-binding</keyword>
<keyword id="KW-0963">Cytoplasm</keyword>
<keyword id="KW-0368">Histidine biosynthesis</keyword>
<keyword id="KW-0378">Hydrolase</keyword>
<keyword id="KW-0547">Nucleotide-binding</keyword>
<keyword id="KW-1185">Reference proteome</keyword>
<proteinExistence type="inferred from homology"/>
<gene>
    <name evidence="1" type="primary">hisE</name>
    <name type="ordered locus">PP_5015</name>
</gene>
<protein>
    <recommendedName>
        <fullName evidence="1">Phosphoribosyl-ATP pyrophosphatase</fullName>
        <shortName evidence="1">PRA-PH</shortName>
        <ecNumber evidence="1">3.6.1.31</ecNumber>
    </recommendedName>
</protein>
<dbReference type="EC" id="3.6.1.31" evidence="1"/>
<dbReference type="EMBL" id="AE015451">
    <property type="protein sequence ID" value="AAN70580.1"/>
    <property type="molecule type" value="Genomic_DNA"/>
</dbReference>
<dbReference type="RefSeq" id="NP_747116.1">
    <property type="nucleotide sequence ID" value="NC_002947.4"/>
</dbReference>
<dbReference type="RefSeq" id="WP_003249283.1">
    <property type="nucleotide sequence ID" value="NZ_CP169744.1"/>
</dbReference>
<dbReference type="SMR" id="Q88D14"/>
<dbReference type="STRING" id="160488.PP_5015"/>
<dbReference type="PaxDb" id="160488-PP_5015"/>
<dbReference type="KEGG" id="ppu:PP_5015"/>
<dbReference type="PATRIC" id="fig|160488.4.peg.5356"/>
<dbReference type="eggNOG" id="COG0140">
    <property type="taxonomic scope" value="Bacteria"/>
</dbReference>
<dbReference type="HOGENOM" id="CLU_123337_1_2_6"/>
<dbReference type="OrthoDB" id="9814738at2"/>
<dbReference type="PhylomeDB" id="Q88D14"/>
<dbReference type="BioCyc" id="PPUT160488:G1G01-5360-MONOMER"/>
<dbReference type="UniPathway" id="UPA00031">
    <property type="reaction ID" value="UER00007"/>
</dbReference>
<dbReference type="Proteomes" id="UP000000556">
    <property type="component" value="Chromosome"/>
</dbReference>
<dbReference type="GO" id="GO:0005737">
    <property type="term" value="C:cytoplasm"/>
    <property type="evidence" value="ECO:0007669"/>
    <property type="project" value="UniProtKB-SubCell"/>
</dbReference>
<dbReference type="GO" id="GO:0005524">
    <property type="term" value="F:ATP binding"/>
    <property type="evidence" value="ECO:0007669"/>
    <property type="project" value="UniProtKB-KW"/>
</dbReference>
<dbReference type="GO" id="GO:0004636">
    <property type="term" value="F:phosphoribosyl-ATP diphosphatase activity"/>
    <property type="evidence" value="ECO:0007669"/>
    <property type="project" value="UniProtKB-UniRule"/>
</dbReference>
<dbReference type="GO" id="GO:0000105">
    <property type="term" value="P:L-histidine biosynthetic process"/>
    <property type="evidence" value="ECO:0007669"/>
    <property type="project" value="UniProtKB-UniRule"/>
</dbReference>
<dbReference type="CDD" id="cd11534">
    <property type="entry name" value="NTP-PPase_HisIE_like"/>
    <property type="match status" value="1"/>
</dbReference>
<dbReference type="Gene3D" id="1.10.287.1080">
    <property type="entry name" value="MazG-like"/>
    <property type="match status" value="1"/>
</dbReference>
<dbReference type="HAMAP" id="MF_01020">
    <property type="entry name" value="HisE"/>
    <property type="match status" value="1"/>
</dbReference>
<dbReference type="InterPro" id="IPR008179">
    <property type="entry name" value="HisE"/>
</dbReference>
<dbReference type="InterPro" id="IPR021130">
    <property type="entry name" value="PRib-ATP_PPHydrolase-like"/>
</dbReference>
<dbReference type="NCBIfam" id="TIGR03188">
    <property type="entry name" value="histidine_hisI"/>
    <property type="match status" value="1"/>
</dbReference>
<dbReference type="NCBIfam" id="NF001611">
    <property type="entry name" value="PRK00400.1-3"/>
    <property type="match status" value="1"/>
</dbReference>
<dbReference type="PANTHER" id="PTHR42945">
    <property type="entry name" value="HISTIDINE BIOSYNTHESIS BIFUNCTIONAL PROTEIN"/>
    <property type="match status" value="1"/>
</dbReference>
<dbReference type="PANTHER" id="PTHR42945:SF9">
    <property type="entry name" value="HISTIDINE BIOSYNTHESIS BIFUNCTIONAL PROTEIN HISIE"/>
    <property type="match status" value="1"/>
</dbReference>
<dbReference type="Pfam" id="PF01503">
    <property type="entry name" value="PRA-PH"/>
    <property type="match status" value="1"/>
</dbReference>
<dbReference type="SUPFAM" id="SSF101386">
    <property type="entry name" value="all-alpha NTP pyrophosphatases"/>
    <property type="match status" value="1"/>
</dbReference>
<comment type="catalytic activity">
    <reaction evidence="1">
        <text>1-(5-phospho-beta-D-ribosyl)-ATP + H2O = 1-(5-phospho-beta-D-ribosyl)-5'-AMP + diphosphate + H(+)</text>
        <dbReference type="Rhea" id="RHEA:22828"/>
        <dbReference type="ChEBI" id="CHEBI:15377"/>
        <dbReference type="ChEBI" id="CHEBI:15378"/>
        <dbReference type="ChEBI" id="CHEBI:33019"/>
        <dbReference type="ChEBI" id="CHEBI:59457"/>
        <dbReference type="ChEBI" id="CHEBI:73183"/>
        <dbReference type="EC" id="3.6.1.31"/>
    </reaction>
</comment>
<comment type="pathway">
    <text evidence="1">Amino-acid biosynthesis; L-histidine biosynthesis; L-histidine from 5-phospho-alpha-D-ribose 1-diphosphate: step 2/9.</text>
</comment>
<comment type="subcellular location">
    <subcellularLocation>
        <location evidence="1">Cytoplasm</location>
    </subcellularLocation>
</comment>
<comment type="similarity">
    <text evidence="1">Belongs to the PRA-PH family.</text>
</comment>
<feature type="chain" id="PRO_0000136377" description="Phosphoribosyl-ATP pyrophosphatase">
    <location>
        <begin position="1"/>
        <end position="111"/>
    </location>
</feature>